<protein>
    <recommendedName>
        <fullName evidence="1">ATP-dependent zinc metalloprotease FtsH 2</fullName>
        <ecNumber evidence="1">3.4.24.-</ecNumber>
    </recommendedName>
</protein>
<reference key="1">
    <citation type="submission" date="2008-01" db="EMBL/GenBank/DDBJ databases">
        <title>Complete sequence of Thermoanaerobacter sp. X514.</title>
        <authorList>
            <consortium name="US DOE Joint Genome Institute"/>
            <person name="Copeland A."/>
            <person name="Lucas S."/>
            <person name="Lapidus A."/>
            <person name="Barry K."/>
            <person name="Glavina del Rio T."/>
            <person name="Dalin E."/>
            <person name="Tice H."/>
            <person name="Pitluck S."/>
            <person name="Bruce D."/>
            <person name="Goodwin L."/>
            <person name="Saunders E."/>
            <person name="Brettin T."/>
            <person name="Detter J.C."/>
            <person name="Han C."/>
            <person name="Schmutz J."/>
            <person name="Larimer F."/>
            <person name="Land M."/>
            <person name="Hauser L."/>
            <person name="Kyrpides N."/>
            <person name="Kim E."/>
            <person name="Hemme C."/>
            <person name="Fields M.W."/>
            <person name="He Z."/>
            <person name="Zhou J."/>
            <person name="Richardson P."/>
        </authorList>
    </citation>
    <scope>NUCLEOTIDE SEQUENCE [LARGE SCALE GENOMIC DNA]</scope>
    <source>
        <strain>X514</strain>
    </source>
</reference>
<evidence type="ECO:0000255" key="1">
    <source>
        <dbReference type="HAMAP-Rule" id="MF_01458"/>
    </source>
</evidence>
<dbReference type="EC" id="3.4.24.-" evidence="1"/>
<dbReference type="EMBL" id="CP000923">
    <property type="protein sequence ID" value="ABY92333.1"/>
    <property type="molecule type" value="Genomic_DNA"/>
</dbReference>
<dbReference type="RefSeq" id="WP_009052774.1">
    <property type="nucleotide sequence ID" value="NC_010320.1"/>
</dbReference>
<dbReference type="SMR" id="B0K657"/>
<dbReference type="KEGG" id="tex:Teth514_1034"/>
<dbReference type="HOGENOM" id="CLU_000688_16_2_9"/>
<dbReference type="Proteomes" id="UP000002155">
    <property type="component" value="Chromosome"/>
</dbReference>
<dbReference type="GO" id="GO:0005886">
    <property type="term" value="C:plasma membrane"/>
    <property type="evidence" value="ECO:0007669"/>
    <property type="project" value="UniProtKB-SubCell"/>
</dbReference>
<dbReference type="GO" id="GO:0005524">
    <property type="term" value="F:ATP binding"/>
    <property type="evidence" value="ECO:0007669"/>
    <property type="project" value="UniProtKB-UniRule"/>
</dbReference>
<dbReference type="GO" id="GO:0016887">
    <property type="term" value="F:ATP hydrolysis activity"/>
    <property type="evidence" value="ECO:0007669"/>
    <property type="project" value="UniProtKB-UniRule"/>
</dbReference>
<dbReference type="GO" id="GO:0004176">
    <property type="term" value="F:ATP-dependent peptidase activity"/>
    <property type="evidence" value="ECO:0007669"/>
    <property type="project" value="InterPro"/>
</dbReference>
<dbReference type="GO" id="GO:0004222">
    <property type="term" value="F:metalloendopeptidase activity"/>
    <property type="evidence" value="ECO:0007669"/>
    <property type="project" value="InterPro"/>
</dbReference>
<dbReference type="GO" id="GO:0008270">
    <property type="term" value="F:zinc ion binding"/>
    <property type="evidence" value="ECO:0007669"/>
    <property type="project" value="UniProtKB-UniRule"/>
</dbReference>
<dbReference type="GO" id="GO:0030163">
    <property type="term" value="P:protein catabolic process"/>
    <property type="evidence" value="ECO:0007669"/>
    <property type="project" value="UniProtKB-UniRule"/>
</dbReference>
<dbReference type="GO" id="GO:0006508">
    <property type="term" value="P:proteolysis"/>
    <property type="evidence" value="ECO:0007669"/>
    <property type="project" value="UniProtKB-KW"/>
</dbReference>
<dbReference type="CDD" id="cd19501">
    <property type="entry name" value="RecA-like_FtsH"/>
    <property type="match status" value="1"/>
</dbReference>
<dbReference type="FunFam" id="1.10.8.60:FF:000001">
    <property type="entry name" value="ATP-dependent zinc metalloprotease FtsH"/>
    <property type="match status" value="1"/>
</dbReference>
<dbReference type="FunFam" id="3.40.50.300:FF:000001">
    <property type="entry name" value="ATP-dependent zinc metalloprotease FtsH"/>
    <property type="match status" value="1"/>
</dbReference>
<dbReference type="Gene3D" id="1.10.8.60">
    <property type="match status" value="1"/>
</dbReference>
<dbReference type="Gene3D" id="3.40.50.300">
    <property type="entry name" value="P-loop containing nucleotide triphosphate hydrolases"/>
    <property type="match status" value="1"/>
</dbReference>
<dbReference type="Gene3D" id="1.20.58.760">
    <property type="entry name" value="Peptidase M41"/>
    <property type="match status" value="1"/>
</dbReference>
<dbReference type="HAMAP" id="MF_01458">
    <property type="entry name" value="FtsH"/>
    <property type="match status" value="1"/>
</dbReference>
<dbReference type="InterPro" id="IPR003593">
    <property type="entry name" value="AAA+_ATPase"/>
</dbReference>
<dbReference type="InterPro" id="IPR041569">
    <property type="entry name" value="AAA_lid_3"/>
</dbReference>
<dbReference type="InterPro" id="IPR003959">
    <property type="entry name" value="ATPase_AAA_core"/>
</dbReference>
<dbReference type="InterPro" id="IPR003960">
    <property type="entry name" value="ATPase_AAA_CS"/>
</dbReference>
<dbReference type="InterPro" id="IPR005936">
    <property type="entry name" value="FtsH"/>
</dbReference>
<dbReference type="InterPro" id="IPR027417">
    <property type="entry name" value="P-loop_NTPase"/>
</dbReference>
<dbReference type="InterPro" id="IPR000642">
    <property type="entry name" value="Peptidase_M41"/>
</dbReference>
<dbReference type="InterPro" id="IPR037219">
    <property type="entry name" value="Peptidase_M41-like"/>
</dbReference>
<dbReference type="PANTHER" id="PTHR23076:SF97">
    <property type="entry name" value="ATP-DEPENDENT ZINC METALLOPROTEASE YME1L1"/>
    <property type="match status" value="1"/>
</dbReference>
<dbReference type="PANTHER" id="PTHR23076">
    <property type="entry name" value="METALLOPROTEASE M41 FTSH"/>
    <property type="match status" value="1"/>
</dbReference>
<dbReference type="Pfam" id="PF00004">
    <property type="entry name" value="AAA"/>
    <property type="match status" value="1"/>
</dbReference>
<dbReference type="Pfam" id="PF17862">
    <property type="entry name" value="AAA_lid_3"/>
    <property type="match status" value="1"/>
</dbReference>
<dbReference type="Pfam" id="PF01434">
    <property type="entry name" value="Peptidase_M41"/>
    <property type="match status" value="1"/>
</dbReference>
<dbReference type="SMART" id="SM00382">
    <property type="entry name" value="AAA"/>
    <property type="match status" value="1"/>
</dbReference>
<dbReference type="SUPFAM" id="SSF140990">
    <property type="entry name" value="FtsH protease domain-like"/>
    <property type="match status" value="1"/>
</dbReference>
<dbReference type="SUPFAM" id="SSF52540">
    <property type="entry name" value="P-loop containing nucleoside triphosphate hydrolases"/>
    <property type="match status" value="1"/>
</dbReference>
<dbReference type="PROSITE" id="PS00674">
    <property type="entry name" value="AAA"/>
    <property type="match status" value="1"/>
</dbReference>
<proteinExistence type="inferred from homology"/>
<keyword id="KW-0067">ATP-binding</keyword>
<keyword id="KW-1003">Cell membrane</keyword>
<keyword id="KW-0378">Hydrolase</keyword>
<keyword id="KW-0472">Membrane</keyword>
<keyword id="KW-0479">Metal-binding</keyword>
<keyword id="KW-0482">Metalloprotease</keyword>
<keyword id="KW-0547">Nucleotide-binding</keyword>
<keyword id="KW-0645">Protease</keyword>
<keyword id="KW-0812">Transmembrane</keyword>
<keyword id="KW-1133">Transmembrane helix</keyword>
<keyword id="KW-0862">Zinc</keyword>
<feature type="chain" id="PRO_0000400407" description="ATP-dependent zinc metalloprotease FtsH 2">
    <location>
        <begin position="1"/>
        <end position="510"/>
    </location>
</feature>
<feature type="topological domain" description="Cytoplasmic" evidence="1">
    <location>
        <begin position="1"/>
        <end position="4"/>
    </location>
</feature>
<feature type="transmembrane region" description="Helical" evidence="1">
    <location>
        <begin position="5"/>
        <end position="25"/>
    </location>
</feature>
<feature type="topological domain" description="Extracellular" evidence="1">
    <location>
        <begin position="26"/>
        <end position="31"/>
    </location>
</feature>
<feature type="transmembrane region" description="Helical" evidence="1">
    <location>
        <begin position="32"/>
        <end position="52"/>
    </location>
</feature>
<feature type="topological domain" description="Cytoplasmic" evidence="1">
    <location>
        <begin position="53"/>
        <end position="510"/>
    </location>
</feature>
<feature type="active site" evidence="1">
    <location>
        <position position="344"/>
    </location>
</feature>
<feature type="binding site" evidence="1">
    <location>
        <begin position="124"/>
        <end position="131"/>
    </location>
    <ligand>
        <name>ATP</name>
        <dbReference type="ChEBI" id="CHEBI:30616"/>
    </ligand>
</feature>
<feature type="binding site" evidence="1">
    <location>
        <position position="343"/>
    </location>
    <ligand>
        <name>Zn(2+)</name>
        <dbReference type="ChEBI" id="CHEBI:29105"/>
        <note>catalytic</note>
    </ligand>
</feature>
<feature type="binding site" evidence="1">
    <location>
        <position position="347"/>
    </location>
    <ligand>
        <name>Zn(2+)</name>
        <dbReference type="ChEBI" id="CHEBI:29105"/>
        <note>catalytic</note>
    </ligand>
</feature>
<feature type="binding site" evidence="1">
    <location>
        <position position="418"/>
    </location>
    <ligand>
        <name>Zn(2+)</name>
        <dbReference type="ChEBI" id="CHEBI:29105"/>
        <note>catalytic</note>
    </ligand>
</feature>
<organism>
    <name type="scientific">Thermoanaerobacter sp. (strain X514)</name>
    <dbReference type="NCBI Taxonomy" id="399726"/>
    <lineage>
        <taxon>Bacteria</taxon>
        <taxon>Bacillati</taxon>
        <taxon>Bacillota</taxon>
        <taxon>Clostridia</taxon>
        <taxon>Thermoanaerobacterales</taxon>
        <taxon>Thermoanaerobacteraceae</taxon>
        <taxon>Thermoanaerobacter</taxon>
    </lineage>
</organism>
<name>FTSH2_THEPX</name>
<sequence>MKKNLHIIILALSIFINLLFIYIFISEVKPNLNLNLSFILTAAVIVVTYLLFKNKFSELMPVNYNNITETKEDTSHRKTNITFKDVAGLDEVIDELKVIIDFMTNTEKYNKMGAKIPKGILFYGPPGTGKTLLATALAGETNSTFISASGSEFVEKYVGVGASRIRALFAKAKKSAPSIIFIDEIDAVGTKRNTDNNSEKDQTLNQLLVEMDGFNSNEGIIVIGATNRIDMLDEALLRPGRFDRTIHIGAPNMKARLEILKVHTRNKPLDESVSLSELARKTHGMTGAHLAAMCNEAAILAVMKNKSKIGKEEFEEALERVIAGLKKKNPSVLEKERNIAAYHEAGHALIGKILNVNTIEKISIVPRGEALGYVLNFPKEDAFLLTKTELKNKITMLLGGRASEEIIFNEISTGAENDLKEATKIAYQMVCNYGMSELGNRVFDLHMLKSTEIVDKEIDKIINSCYILAKKILLENKHKVIAIAEKLLEKESITKEELETLWEEENTLCV</sequence>
<comment type="function">
    <text evidence="1">Acts as a processive, ATP-dependent zinc metallopeptidase for both cytoplasmic and membrane proteins. Plays a role in the quality control of integral membrane proteins.</text>
</comment>
<comment type="cofactor">
    <cofactor evidence="1">
        <name>Zn(2+)</name>
        <dbReference type="ChEBI" id="CHEBI:29105"/>
    </cofactor>
    <text evidence="1">Binds 1 zinc ion per subunit.</text>
</comment>
<comment type="subunit">
    <text evidence="1">Homohexamer.</text>
</comment>
<comment type="subcellular location">
    <subcellularLocation>
        <location evidence="1">Cell membrane</location>
        <topology evidence="1">Multi-pass membrane protein</topology>
        <orientation evidence="1">Cytoplasmic side</orientation>
    </subcellularLocation>
</comment>
<comment type="similarity">
    <text evidence="1">In the central section; belongs to the AAA ATPase family.</text>
</comment>
<comment type="similarity">
    <text evidence="1">In the C-terminal section; belongs to the peptidase M41 family.</text>
</comment>
<gene>
    <name evidence="1" type="primary">ftsH2</name>
    <name type="ordered locus">Teth514_1034</name>
</gene>
<accession>B0K657</accession>